<feature type="chain" id="PRO_1000128855" description="Adenine deaminase">
    <location>
        <begin position="1"/>
        <end position="316"/>
    </location>
</feature>
<feature type="active site" description="Proton donor" evidence="1">
    <location>
        <position position="197"/>
    </location>
</feature>
<feature type="binding site" evidence="1">
    <location>
        <position position="14"/>
    </location>
    <ligand>
        <name>Zn(2+)</name>
        <dbReference type="ChEBI" id="CHEBI:29105"/>
        <note>catalytic</note>
    </ligand>
</feature>
<feature type="binding site" evidence="1">
    <location>
        <position position="16"/>
    </location>
    <ligand>
        <name>Zn(2+)</name>
        <dbReference type="ChEBI" id="CHEBI:29105"/>
        <note>catalytic</note>
    </ligand>
</feature>
<feature type="binding site" evidence="1">
    <location>
        <position position="194"/>
    </location>
    <ligand>
        <name>Zn(2+)</name>
        <dbReference type="ChEBI" id="CHEBI:29105"/>
        <note>catalytic</note>
    </ligand>
</feature>
<feature type="binding site" evidence="1">
    <location>
        <position position="275"/>
    </location>
    <ligand>
        <name>Zn(2+)</name>
        <dbReference type="ChEBI" id="CHEBI:29105"/>
        <note>catalytic</note>
    </ligand>
</feature>
<feature type="binding site" evidence="1">
    <location>
        <position position="276"/>
    </location>
    <ligand>
        <name>substrate</name>
    </ligand>
</feature>
<feature type="site" description="Important for catalytic activity" evidence="1">
    <location>
        <position position="218"/>
    </location>
</feature>
<name>ADE_PSEA8</name>
<keyword id="KW-0378">Hydrolase</keyword>
<keyword id="KW-0479">Metal-binding</keyword>
<keyword id="KW-0546">Nucleotide metabolism</keyword>
<keyword id="KW-0862">Zinc</keyword>
<sequence>MYEWLNALPKAELHLHLEGTLEPELLFALAERNRIALPWNDVETLRKAYAFNNLQEFLDLYYAGADVLRTEQDFYDLTWAYLQKCKAQNVVHVEPFFDPQTHTDRGIPFEVVLAGIRAALRDGEKLLGIRHGLILSFLRHLSEEQAQKTLDQALPFRDAFIAVGLDSSEVGHPPSKFQRVFDRARSEGFLTVAHAGEEGPPEYIWEALDLLKVERIDHGVRAFEDERLMRRLIDEQIPLTVCPLSNTKLCVFDDMSQHTILDMLERGVKVTVNSDDPAYFGGYVTENFHALQQSLGMTEEQARRLAQNSLDARLVK</sequence>
<evidence type="ECO:0000255" key="1">
    <source>
        <dbReference type="HAMAP-Rule" id="MF_01962"/>
    </source>
</evidence>
<accession>B7V265</accession>
<reference key="1">
    <citation type="journal article" date="2009" name="Genome Res.">
        <title>Newly introduced genomic prophage islands are critical determinants of in vivo competitiveness in the Liverpool epidemic strain of Pseudomonas aeruginosa.</title>
        <authorList>
            <person name="Winstanley C."/>
            <person name="Langille M.G.I."/>
            <person name="Fothergill J.L."/>
            <person name="Kukavica-Ibrulj I."/>
            <person name="Paradis-Bleau C."/>
            <person name="Sanschagrin F."/>
            <person name="Thomson N.R."/>
            <person name="Winsor G.L."/>
            <person name="Quail M.A."/>
            <person name="Lennard N."/>
            <person name="Bignell A."/>
            <person name="Clarke L."/>
            <person name="Seeger K."/>
            <person name="Saunders D."/>
            <person name="Harris D."/>
            <person name="Parkhill J."/>
            <person name="Hancock R.E.W."/>
            <person name="Brinkman F.S.L."/>
            <person name="Levesque R.C."/>
        </authorList>
    </citation>
    <scope>NUCLEOTIDE SEQUENCE [LARGE SCALE GENOMIC DNA]</scope>
    <source>
        <strain>LESB58</strain>
    </source>
</reference>
<organism>
    <name type="scientific">Pseudomonas aeruginosa (strain LESB58)</name>
    <dbReference type="NCBI Taxonomy" id="557722"/>
    <lineage>
        <taxon>Bacteria</taxon>
        <taxon>Pseudomonadati</taxon>
        <taxon>Pseudomonadota</taxon>
        <taxon>Gammaproteobacteria</taxon>
        <taxon>Pseudomonadales</taxon>
        <taxon>Pseudomonadaceae</taxon>
        <taxon>Pseudomonas</taxon>
    </lineage>
</organism>
<gene>
    <name type="ordered locus">PLES_01491</name>
</gene>
<proteinExistence type="inferred from homology"/>
<dbReference type="EC" id="3.5.4.2" evidence="1"/>
<dbReference type="EMBL" id="FM209186">
    <property type="protein sequence ID" value="CAW24876.1"/>
    <property type="molecule type" value="Genomic_DNA"/>
</dbReference>
<dbReference type="RefSeq" id="WP_003112641.1">
    <property type="nucleotide sequence ID" value="NC_011770.1"/>
</dbReference>
<dbReference type="SMR" id="B7V265"/>
<dbReference type="KEGG" id="pag:PLES_01491"/>
<dbReference type="HOGENOM" id="CLU_039228_7_0_6"/>
<dbReference type="GO" id="GO:0005829">
    <property type="term" value="C:cytosol"/>
    <property type="evidence" value="ECO:0007669"/>
    <property type="project" value="TreeGrafter"/>
</dbReference>
<dbReference type="GO" id="GO:0000034">
    <property type="term" value="F:adenine deaminase activity"/>
    <property type="evidence" value="ECO:0007669"/>
    <property type="project" value="UniProtKB-UniRule"/>
</dbReference>
<dbReference type="GO" id="GO:0008270">
    <property type="term" value="F:zinc ion binding"/>
    <property type="evidence" value="ECO:0007669"/>
    <property type="project" value="UniProtKB-UniRule"/>
</dbReference>
<dbReference type="GO" id="GO:0006146">
    <property type="term" value="P:adenine catabolic process"/>
    <property type="evidence" value="ECO:0007669"/>
    <property type="project" value="UniProtKB-UniRule"/>
</dbReference>
<dbReference type="GO" id="GO:0043103">
    <property type="term" value="P:hypoxanthine salvage"/>
    <property type="evidence" value="ECO:0007669"/>
    <property type="project" value="UniProtKB-UniRule"/>
</dbReference>
<dbReference type="GO" id="GO:0009117">
    <property type="term" value="P:nucleotide metabolic process"/>
    <property type="evidence" value="ECO:0007669"/>
    <property type="project" value="UniProtKB-KW"/>
</dbReference>
<dbReference type="CDD" id="cd01320">
    <property type="entry name" value="ADA"/>
    <property type="match status" value="1"/>
</dbReference>
<dbReference type="FunFam" id="3.20.20.140:FF:000039">
    <property type="entry name" value="Adenine deaminase"/>
    <property type="match status" value="1"/>
</dbReference>
<dbReference type="Gene3D" id="3.20.20.140">
    <property type="entry name" value="Metal-dependent hydrolases"/>
    <property type="match status" value="1"/>
</dbReference>
<dbReference type="HAMAP" id="MF_01962">
    <property type="entry name" value="Adenine_deaminase"/>
    <property type="match status" value="1"/>
</dbReference>
<dbReference type="InterPro" id="IPR001365">
    <property type="entry name" value="A_deaminase_dom"/>
</dbReference>
<dbReference type="InterPro" id="IPR028892">
    <property type="entry name" value="ADE"/>
</dbReference>
<dbReference type="InterPro" id="IPR006330">
    <property type="entry name" value="Ado/ade_deaminase"/>
</dbReference>
<dbReference type="InterPro" id="IPR032466">
    <property type="entry name" value="Metal_Hydrolase"/>
</dbReference>
<dbReference type="NCBIfam" id="TIGR01430">
    <property type="entry name" value="aden_deam"/>
    <property type="match status" value="1"/>
</dbReference>
<dbReference type="NCBIfam" id="NF006850">
    <property type="entry name" value="PRK09358.1-6"/>
    <property type="match status" value="1"/>
</dbReference>
<dbReference type="PANTHER" id="PTHR43114">
    <property type="entry name" value="ADENINE DEAMINASE"/>
    <property type="match status" value="1"/>
</dbReference>
<dbReference type="PANTHER" id="PTHR43114:SF6">
    <property type="entry name" value="ADENINE DEAMINASE"/>
    <property type="match status" value="1"/>
</dbReference>
<dbReference type="Pfam" id="PF00962">
    <property type="entry name" value="A_deaminase"/>
    <property type="match status" value="1"/>
</dbReference>
<dbReference type="SUPFAM" id="SSF51556">
    <property type="entry name" value="Metallo-dependent hydrolases"/>
    <property type="match status" value="1"/>
</dbReference>
<comment type="function">
    <text evidence="1">Catalyzes the hydrolytic deamination of adenine to hypoxanthine. Plays an important role in the purine salvage pathway and in nitrogen catabolism.</text>
</comment>
<comment type="catalytic activity">
    <reaction evidence="1">
        <text>adenine + H2O + H(+) = hypoxanthine + NH4(+)</text>
        <dbReference type="Rhea" id="RHEA:23688"/>
        <dbReference type="ChEBI" id="CHEBI:15377"/>
        <dbReference type="ChEBI" id="CHEBI:15378"/>
        <dbReference type="ChEBI" id="CHEBI:16708"/>
        <dbReference type="ChEBI" id="CHEBI:17368"/>
        <dbReference type="ChEBI" id="CHEBI:28938"/>
        <dbReference type="EC" id="3.5.4.2"/>
    </reaction>
</comment>
<comment type="cofactor">
    <cofactor evidence="1">
        <name>Zn(2+)</name>
        <dbReference type="ChEBI" id="CHEBI:29105"/>
    </cofactor>
    <text evidence="1">Binds 1 zinc ion per subunit.</text>
</comment>
<comment type="similarity">
    <text evidence="1">Belongs to the metallo-dependent hydrolases superfamily. Adenosine and AMP deaminases family. Adenine deaminase type 2 subfamily.</text>
</comment>
<protein>
    <recommendedName>
        <fullName evidence="1">Adenine deaminase</fullName>
        <shortName evidence="1">ADE</shortName>
        <ecNumber evidence="1">3.5.4.2</ecNumber>
    </recommendedName>
    <alternativeName>
        <fullName evidence="1">Adenine aminohydrolase</fullName>
        <shortName evidence="1">AAH</shortName>
    </alternativeName>
</protein>